<name>U6DD_CONCL</name>
<proteinExistence type="inferred from homology"/>
<protein>
    <recommendedName>
        <fullName>Conotoxin Cl6.13</fullName>
    </recommendedName>
</protein>
<accession>D6C4K3</accession>
<feature type="signal peptide" evidence="2">
    <location>
        <begin position="1"/>
        <end position="21"/>
    </location>
</feature>
<feature type="propeptide" id="PRO_0000414999" evidence="1">
    <location>
        <begin position="22"/>
        <end position="33"/>
    </location>
</feature>
<feature type="peptide" id="PRO_0000415000" description="Conotoxin Cl6.13">
    <location>
        <begin position="35"/>
        <end position="70"/>
    </location>
</feature>
<feature type="disulfide bond" evidence="1">
    <location>
        <begin position="41"/>
        <end position="58"/>
    </location>
</feature>
<feature type="disulfide bond" evidence="1">
    <location>
        <begin position="48"/>
        <end position="63"/>
    </location>
</feature>
<feature type="disulfide bond" evidence="1">
    <location>
        <begin position="57"/>
        <end position="68"/>
    </location>
</feature>
<organism>
    <name type="scientific">Californiconus californicus</name>
    <name type="common">California cone</name>
    <name type="synonym">Conus californicus</name>
    <dbReference type="NCBI Taxonomy" id="1736779"/>
    <lineage>
        <taxon>Eukaryota</taxon>
        <taxon>Metazoa</taxon>
        <taxon>Spiralia</taxon>
        <taxon>Lophotrochozoa</taxon>
        <taxon>Mollusca</taxon>
        <taxon>Gastropoda</taxon>
        <taxon>Caenogastropoda</taxon>
        <taxon>Neogastropoda</taxon>
        <taxon>Conoidea</taxon>
        <taxon>Conidae</taxon>
        <taxon>Californiconus</taxon>
    </lineage>
</organism>
<dbReference type="EMBL" id="FJ959145">
    <property type="protein sequence ID" value="ADB93115.1"/>
    <property type="molecule type" value="Genomic_DNA"/>
</dbReference>
<dbReference type="ConoServer" id="4029">
    <property type="toxin name" value="Cal6.13 precursor"/>
</dbReference>
<dbReference type="GO" id="GO:0005576">
    <property type="term" value="C:extracellular region"/>
    <property type="evidence" value="ECO:0007669"/>
    <property type="project" value="UniProtKB-SubCell"/>
</dbReference>
<dbReference type="GO" id="GO:0090729">
    <property type="term" value="F:toxin activity"/>
    <property type="evidence" value="ECO:0007669"/>
    <property type="project" value="UniProtKB-KW"/>
</dbReference>
<sequence length="70" mass="7562">MKFPLLFISLALAAFLTRVQDADSSVISKEKSVRDGEEFPCAGTMADCRGLADNSVCCDTGKCIGEVCYY</sequence>
<keyword id="KW-1015">Disulfide bond</keyword>
<keyword id="KW-0960">Knottin</keyword>
<keyword id="KW-0528">Neurotoxin</keyword>
<keyword id="KW-0964">Secreted</keyword>
<keyword id="KW-0732">Signal</keyword>
<keyword id="KW-0800">Toxin</keyword>
<evidence type="ECO:0000250" key="1"/>
<evidence type="ECO:0000255" key="2"/>
<reference key="1">
    <citation type="journal article" date="2010" name="Mol. Phylogenet. Evol.">
        <title>Evolution of Conus peptide toxins: analysis of Conus californicus Reeve, 1844.</title>
        <authorList>
            <person name="Biggs J.S."/>
            <person name="Watkins M."/>
            <person name="Puillandre N."/>
            <person name="Ownby J.P."/>
            <person name="Lopez-Vera E."/>
            <person name="Christensen S."/>
            <person name="Moreno K.J."/>
            <person name="Bernaldez J."/>
            <person name="Licea-Navarro A."/>
            <person name="Corneli P.S."/>
            <person name="Olivera B.M."/>
        </authorList>
    </citation>
    <scope>NUCLEOTIDE SEQUENCE [GENOMIC DNA]</scope>
</reference>
<comment type="subcellular location">
    <subcellularLocation>
        <location evidence="1">Secreted</location>
    </subcellularLocation>
</comment>
<comment type="tissue specificity">
    <text>Expressed by the venom duct.</text>
</comment>
<comment type="domain">
    <text evidence="1">The presence of a 'disulfide through disulfide knot' structurally defines this protein as a knottin.</text>
</comment>
<comment type="domain">
    <text>The cysteine framework is VI/VII (C-C-CC-C-C).</text>
</comment>